<gene>
    <name evidence="1" type="primary">cbiM</name>
    <name type="ordered locus">Clocel_2220</name>
</gene>
<accession>D9SNZ5</accession>
<comment type="function">
    <text evidence="1">Part of the energy-coupling factor (ECF) transporter complex CbiMNOQ involved in cobalt import.</text>
</comment>
<comment type="pathway">
    <text evidence="1">Cofactor biosynthesis; adenosylcobalamin biosynthesis.</text>
</comment>
<comment type="subunit">
    <text evidence="1">Forms an energy-coupling factor (ECF) transporter complex composed of an ATP-binding protein (A component, CbiO), a transmembrane protein (T component, CbiQ) and 2 possible substrate-capture proteins (S components, CbiM and CbiN) of unknown stoichimetry.</text>
</comment>
<comment type="subcellular location">
    <subcellularLocation>
        <location evidence="1">Cell membrane</location>
        <topology evidence="1">Multi-pass membrane protein</topology>
    </subcellularLocation>
</comment>
<comment type="similarity">
    <text evidence="1">Belongs to the CbiM family.</text>
</comment>
<protein>
    <recommendedName>
        <fullName evidence="1">Cobalt transport protein CbiM</fullName>
    </recommendedName>
    <alternativeName>
        <fullName evidence="1">Energy-coupling factor transporter probable substrate-capture protein CbiM</fullName>
        <shortName evidence="1">ECF transporter S component CbiM</shortName>
    </alternativeName>
</protein>
<reference key="1">
    <citation type="submission" date="2010-08" db="EMBL/GenBank/DDBJ databases">
        <title>Complete sequence of Clostridium cellulovorans 743B.</title>
        <authorList>
            <consortium name="US DOE Joint Genome Institute"/>
            <person name="Lucas S."/>
            <person name="Copeland A."/>
            <person name="Lapidus A."/>
            <person name="Cheng J.-F."/>
            <person name="Bruce D."/>
            <person name="Goodwin L."/>
            <person name="Pitluck S."/>
            <person name="Chertkov O."/>
            <person name="Detter J.C."/>
            <person name="Han C."/>
            <person name="Tapia R."/>
            <person name="Land M."/>
            <person name="Hauser L."/>
            <person name="Chang Y.-J."/>
            <person name="Jeffries C."/>
            <person name="Kyrpides N."/>
            <person name="Ivanova N."/>
            <person name="Mikhailova N."/>
            <person name="Hemme C.L."/>
            <person name="Woyke T."/>
        </authorList>
    </citation>
    <scope>NUCLEOTIDE SEQUENCE [LARGE SCALE GENOMIC DNA]</scope>
    <source>
        <strain>ATCC 35296 / DSM 3052 / OCM 3 / 743B</strain>
    </source>
</reference>
<name>CBIM_CLOC7</name>
<evidence type="ECO:0000255" key="1">
    <source>
        <dbReference type="HAMAP-Rule" id="MF_01462"/>
    </source>
</evidence>
<sequence>MKLGESMKKNATLSVKIIAFLGVLIFTVMPVANAMHIMEGYLSPKWCIIWGILVLPFLIKGSLNVKKVVSDDQRIKLLFAMAGAFIFILSALKLPSFTGTSSHPTGIGLSTILFGPAITTVLGVIVLLFQALLLAHGGISTLGANSFAMAVMGPLMAYGVYKILQKIKIPQNINIFFSATVGDLFTYCITAIQLGIDHPLEYDGIFASIERYLGVFAITQIPIAIAEGILTVLIFNVIAKYSSKELGKLGILNNSEEAEL</sequence>
<proteinExistence type="inferred from homology"/>
<keyword id="KW-1003">Cell membrane</keyword>
<keyword id="KW-0169">Cobalamin biosynthesis</keyword>
<keyword id="KW-0170">Cobalt</keyword>
<keyword id="KW-0171">Cobalt transport</keyword>
<keyword id="KW-0406">Ion transport</keyword>
<keyword id="KW-0472">Membrane</keyword>
<keyword id="KW-1185">Reference proteome</keyword>
<keyword id="KW-0732">Signal</keyword>
<keyword id="KW-0812">Transmembrane</keyword>
<keyword id="KW-1133">Transmembrane helix</keyword>
<keyword id="KW-0813">Transport</keyword>
<organism>
    <name type="scientific">Clostridium cellulovorans (strain ATCC 35296 / DSM 3052 / OCM 3 / 743B)</name>
    <dbReference type="NCBI Taxonomy" id="573061"/>
    <lineage>
        <taxon>Bacteria</taxon>
        <taxon>Bacillati</taxon>
        <taxon>Bacillota</taxon>
        <taxon>Clostridia</taxon>
        <taxon>Eubacteriales</taxon>
        <taxon>Clostridiaceae</taxon>
        <taxon>Clostridium</taxon>
    </lineage>
</organism>
<feature type="signal peptide" evidence="1">
    <location>
        <begin position="1"/>
        <end position="34"/>
    </location>
</feature>
<feature type="chain" id="PRO_5000619419" description="Cobalt transport protein CbiM">
    <location>
        <begin position="35"/>
        <end position="260"/>
    </location>
</feature>
<feature type="transmembrane region" description="Helical" evidence="1">
    <location>
        <begin position="39"/>
        <end position="59"/>
    </location>
</feature>
<feature type="transmembrane region" description="Helical" evidence="1">
    <location>
        <begin position="77"/>
        <end position="97"/>
    </location>
</feature>
<feature type="transmembrane region" description="Helical" evidence="1">
    <location>
        <begin position="109"/>
        <end position="129"/>
    </location>
</feature>
<feature type="transmembrane region" description="Helical" evidence="1">
    <location>
        <begin position="132"/>
        <end position="152"/>
    </location>
</feature>
<feature type="transmembrane region" description="Helical" evidence="1">
    <location>
        <begin position="175"/>
        <end position="195"/>
    </location>
</feature>
<feature type="transmembrane region" description="Helical" evidence="1">
    <location>
        <begin position="215"/>
        <end position="235"/>
    </location>
</feature>
<dbReference type="EMBL" id="CP002160">
    <property type="protein sequence ID" value="ADL51960.1"/>
    <property type="molecule type" value="Genomic_DNA"/>
</dbReference>
<dbReference type="RefSeq" id="WP_010076814.1">
    <property type="nucleotide sequence ID" value="NC_014393.1"/>
</dbReference>
<dbReference type="SMR" id="D9SNZ5"/>
<dbReference type="STRING" id="573061.Clocel_2220"/>
<dbReference type="KEGG" id="ccb:Clocel_2220"/>
<dbReference type="eggNOG" id="COG0310">
    <property type="taxonomic scope" value="Bacteria"/>
</dbReference>
<dbReference type="HOGENOM" id="CLU_052508_3_0_9"/>
<dbReference type="OrthoDB" id="9809846at2"/>
<dbReference type="UniPathway" id="UPA00148"/>
<dbReference type="Proteomes" id="UP000002730">
    <property type="component" value="Chromosome"/>
</dbReference>
<dbReference type="GO" id="GO:0043190">
    <property type="term" value="C:ATP-binding cassette (ABC) transporter complex"/>
    <property type="evidence" value="ECO:0007669"/>
    <property type="project" value="InterPro"/>
</dbReference>
<dbReference type="GO" id="GO:0015087">
    <property type="term" value="F:cobalt ion transmembrane transporter activity"/>
    <property type="evidence" value="ECO:0007669"/>
    <property type="project" value="UniProtKB-UniRule"/>
</dbReference>
<dbReference type="GO" id="GO:0009236">
    <property type="term" value="P:cobalamin biosynthetic process"/>
    <property type="evidence" value="ECO:0007669"/>
    <property type="project" value="UniProtKB-UniRule"/>
</dbReference>
<dbReference type="FunFam" id="1.10.1760.20:FF:000001">
    <property type="entry name" value="Cobalt transport protein CbiM"/>
    <property type="match status" value="1"/>
</dbReference>
<dbReference type="Gene3D" id="1.10.1760.20">
    <property type="match status" value="1"/>
</dbReference>
<dbReference type="HAMAP" id="MF_01462">
    <property type="entry name" value="CbiM"/>
    <property type="match status" value="1"/>
</dbReference>
<dbReference type="InterPro" id="IPR018024">
    <property type="entry name" value="CbiM"/>
</dbReference>
<dbReference type="InterPro" id="IPR002751">
    <property type="entry name" value="CbiM/NikMN"/>
</dbReference>
<dbReference type="NCBIfam" id="TIGR00123">
    <property type="entry name" value="cbiM"/>
    <property type="match status" value="1"/>
</dbReference>
<dbReference type="NCBIfam" id="NF006184">
    <property type="entry name" value="PRK08319.1"/>
    <property type="match status" value="1"/>
</dbReference>
<dbReference type="PANTHER" id="PTHR43627">
    <property type="match status" value="1"/>
</dbReference>
<dbReference type="PANTHER" id="PTHR43627:SF1">
    <property type="entry name" value="COBALT TRANSPORT PROTEIN CBIM"/>
    <property type="match status" value="1"/>
</dbReference>
<dbReference type="Pfam" id="PF01891">
    <property type="entry name" value="CbiM"/>
    <property type="match status" value="1"/>
</dbReference>